<reference key="1">
    <citation type="journal article" date="1994" name="Biochem. Biophys. Res. Commun.">
        <title>cDNA and deduced amino acid sequence of a dwarf goat liver cytochrome P450 fragment belonging to the CYP2C gene subfamily.</title>
        <authorList>
            <person name="Zeilmaker W.M."/>
            <person name="van 't Klooster G.A.E."/>
            <person name="Gremmels-Gehrmann J.F."/>
            <person name="van Miert A.S.J.P.A."/>
            <person name="Horbach G.J.M.J."/>
        </authorList>
    </citation>
    <scope>NUCLEOTIDE SEQUENCE [MRNA]</scope>
    <source>
        <strain>West-African dwarf</strain>
        <tissue>Liver</tissue>
    </source>
</reference>
<organism>
    <name type="scientific">Capra hircus aegagrus</name>
    <name type="common">Wild goat</name>
    <name type="synonym">Capra aegagrus</name>
    <dbReference type="NCBI Taxonomy" id="9923"/>
    <lineage>
        <taxon>Eukaryota</taxon>
        <taxon>Metazoa</taxon>
        <taxon>Chordata</taxon>
        <taxon>Craniata</taxon>
        <taxon>Vertebrata</taxon>
        <taxon>Euteleostomi</taxon>
        <taxon>Mammalia</taxon>
        <taxon>Eutheria</taxon>
        <taxon>Laurasiatheria</taxon>
        <taxon>Artiodactyla</taxon>
        <taxon>Ruminantia</taxon>
        <taxon>Pecora</taxon>
        <taxon>Bovidae</taxon>
        <taxon>Caprinae</taxon>
        <taxon>Capra</taxon>
    </lineage>
</organism>
<gene>
    <name type="primary">CYP2C31</name>
</gene>
<name>CP2CV_CAPHE</name>
<comment type="function">
    <text>Cytochromes P450 are a group of heme-thiolate monooxygenases. In liver microsomes, this enzyme is involved in an NADPH-dependent electron transport pathway. It oxidizes a variety of structurally unrelated compounds, including steroids, fatty acids, and xenobiotics.</text>
</comment>
<comment type="catalytic activity">
    <reaction>
        <text>an organic molecule + reduced [NADPH--hemoprotein reductase] + O2 = an alcohol + oxidized [NADPH--hemoprotein reductase] + H2O + H(+)</text>
        <dbReference type="Rhea" id="RHEA:17149"/>
        <dbReference type="Rhea" id="RHEA-COMP:11964"/>
        <dbReference type="Rhea" id="RHEA-COMP:11965"/>
        <dbReference type="ChEBI" id="CHEBI:15377"/>
        <dbReference type="ChEBI" id="CHEBI:15378"/>
        <dbReference type="ChEBI" id="CHEBI:15379"/>
        <dbReference type="ChEBI" id="CHEBI:30879"/>
        <dbReference type="ChEBI" id="CHEBI:57618"/>
        <dbReference type="ChEBI" id="CHEBI:58210"/>
        <dbReference type="ChEBI" id="CHEBI:142491"/>
        <dbReference type="EC" id="1.14.14.1"/>
    </reaction>
</comment>
<comment type="cofactor">
    <cofactor evidence="1">
        <name>heme</name>
        <dbReference type="ChEBI" id="CHEBI:30413"/>
    </cofactor>
</comment>
<comment type="subcellular location">
    <subcellularLocation>
        <location>Endoplasmic reticulum membrane</location>
        <topology>Peripheral membrane protein</topology>
    </subcellularLocation>
    <subcellularLocation>
        <location>Microsome membrane</location>
        <topology>Peripheral membrane protein</topology>
    </subcellularLocation>
</comment>
<comment type="induction">
    <text>P450 can be induced to high levels in liver and other tissues by various foreign compounds, including drugs, pesticides, and carcinogens.</text>
</comment>
<comment type="similarity">
    <text evidence="2">Belongs to the cytochrome P450 family.</text>
</comment>
<protein>
    <recommendedName>
        <fullName>Cytochrome P450 2C31</fullName>
        <ecNumber>1.14.14.1</ecNumber>
    </recommendedName>
    <alternativeName>
        <fullName>CYPIIC31</fullName>
    </alternativeName>
</protein>
<accession>Q29478</accession>
<dbReference type="EC" id="1.14.14.1"/>
<dbReference type="EMBL" id="X76502">
    <property type="protein sequence ID" value="CAA54037.1"/>
    <property type="molecule type" value="mRNA"/>
</dbReference>
<dbReference type="SMR" id="Q29478"/>
<dbReference type="GO" id="GO:0005789">
    <property type="term" value="C:endoplasmic reticulum membrane"/>
    <property type="evidence" value="ECO:0007669"/>
    <property type="project" value="UniProtKB-SubCell"/>
</dbReference>
<dbReference type="GO" id="GO:0020037">
    <property type="term" value="F:heme binding"/>
    <property type="evidence" value="ECO:0007669"/>
    <property type="project" value="InterPro"/>
</dbReference>
<dbReference type="GO" id="GO:0005506">
    <property type="term" value="F:iron ion binding"/>
    <property type="evidence" value="ECO:0007669"/>
    <property type="project" value="InterPro"/>
</dbReference>
<dbReference type="GO" id="GO:0016712">
    <property type="term" value="F:oxidoreductase activity, acting on paired donors, with incorporation or reduction of molecular oxygen, reduced flavin or flavoprotein as one donor, and incorporation of one atom of oxygen"/>
    <property type="evidence" value="ECO:0007669"/>
    <property type="project" value="UniProtKB-EC"/>
</dbReference>
<dbReference type="GO" id="GO:0006082">
    <property type="term" value="P:organic acid metabolic process"/>
    <property type="evidence" value="ECO:0007669"/>
    <property type="project" value="TreeGrafter"/>
</dbReference>
<dbReference type="GO" id="GO:0006805">
    <property type="term" value="P:xenobiotic metabolic process"/>
    <property type="evidence" value="ECO:0007669"/>
    <property type="project" value="TreeGrafter"/>
</dbReference>
<dbReference type="FunFam" id="1.10.630.10:FF:000238">
    <property type="entry name" value="Cytochrome P450 2A6"/>
    <property type="match status" value="1"/>
</dbReference>
<dbReference type="Gene3D" id="1.10.630.10">
    <property type="entry name" value="Cytochrome P450"/>
    <property type="match status" value="1"/>
</dbReference>
<dbReference type="InterPro" id="IPR001128">
    <property type="entry name" value="Cyt_P450"/>
</dbReference>
<dbReference type="InterPro" id="IPR017972">
    <property type="entry name" value="Cyt_P450_CS"/>
</dbReference>
<dbReference type="InterPro" id="IPR002401">
    <property type="entry name" value="Cyt_P450_E_grp-I"/>
</dbReference>
<dbReference type="InterPro" id="IPR036396">
    <property type="entry name" value="Cyt_P450_sf"/>
</dbReference>
<dbReference type="InterPro" id="IPR050182">
    <property type="entry name" value="Cytochrome_P450_fam2"/>
</dbReference>
<dbReference type="PANTHER" id="PTHR24300:SF200">
    <property type="entry name" value="CYTOCHROME P450 2C70"/>
    <property type="match status" value="1"/>
</dbReference>
<dbReference type="PANTHER" id="PTHR24300">
    <property type="entry name" value="CYTOCHROME P450 508A4-RELATED"/>
    <property type="match status" value="1"/>
</dbReference>
<dbReference type="Pfam" id="PF00067">
    <property type="entry name" value="p450"/>
    <property type="match status" value="1"/>
</dbReference>
<dbReference type="PRINTS" id="PR00463">
    <property type="entry name" value="EP450I"/>
</dbReference>
<dbReference type="PRINTS" id="PR00385">
    <property type="entry name" value="P450"/>
</dbReference>
<dbReference type="SUPFAM" id="SSF48264">
    <property type="entry name" value="Cytochrome P450"/>
    <property type="match status" value="1"/>
</dbReference>
<dbReference type="PROSITE" id="PS00086">
    <property type="entry name" value="CYTOCHROME_P450"/>
    <property type="match status" value="1"/>
</dbReference>
<evidence type="ECO:0000250" key="1"/>
<evidence type="ECO:0000305" key="2"/>
<keyword id="KW-0256">Endoplasmic reticulum</keyword>
<keyword id="KW-0349">Heme</keyword>
<keyword id="KW-0408">Iron</keyword>
<keyword id="KW-0472">Membrane</keyword>
<keyword id="KW-0479">Metal-binding</keyword>
<keyword id="KW-0492">Microsome</keyword>
<keyword id="KW-0503">Monooxygenase</keyword>
<keyword id="KW-0560">Oxidoreductase</keyword>
<feature type="chain" id="PRO_0000051719" description="Cytochrome P450 2C31">
    <location>
        <begin position="1" status="less than"/>
        <end position="284"/>
    </location>
</feature>
<feature type="binding site" description="axial binding residue" evidence="1">
    <location>
        <position position="229"/>
    </location>
    <ligand>
        <name>heme</name>
        <dbReference type="ChEBI" id="CHEBI:30413"/>
    </ligand>
    <ligandPart>
        <name>Fe</name>
        <dbReference type="ChEBI" id="CHEBI:18248"/>
    </ligandPart>
</feature>
<feature type="non-terminal residue">
    <location>
        <position position="1"/>
    </location>
</feature>
<sequence length="284" mass="32627">LVSTPWIELFNAFPSLLRHFPGSHNTIFKNMTEQRKFILEEIKKHQESLDLNNPQDFIDYFLIKMEKEKHNKHSEFTMDNLITTVWDVFSAGTETTSLTLRYGLLLLLKHPEVTAKVQEEIDRVVGRNRSPCMQDRSRMPYTDAVLHEIQRYIDLVPSNLPHVATQDVKFREYLIPKGTAILTSLTSVLHDGKEFPNPGQFDPAHFLDESGNFKKTDHFMAFSAGKRVCVGEGLARMELFLLLVSILQHFTLKPVVDPKHIDIAPSFKGMLSIPPFCEMCFIPV</sequence>
<proteinExistence type="evidence at transcript level"/>